<reference key="1">
    <citation type="journal article" date="1980" name="Gene">
        <title>Sequence of a yeast DNA fragment containing a chromosomal replicator and the TRP1 gene.</title>
        <authorList>
            <person name="Tschumper G."/>
            <person name="Carbon J."/>
        </authorList>
    </citation>
    <scope>NUCLEOTIDE SEQUENCE [GENOMIC DNA]</scope>
</reference>
<reference key="2">
    <citation type="journal article" date="1993" name="Yeast">
        <title>A series of yeast shuttle vectors for expression of cDNAs and other DNA sequences.</title>
        <authorList>
            <person name="Brunelli J.P."/>
            <person name="Pall M.L."/>
        </authorList>
    </citation>
    <scope>NUCLEOTIDE SEQUENCE [GENOMIC DNA]</scope>
</reference>
<reference key="3">
    <citation type="submission" date="1995-10" db="EMBL/GenBank/DDBJ databases">
        <authorList>
            <person name="Lieberman B."/>
        </authorList>
    </citation>
    <scope>NUCLEOTIDE SEQUENCE [GENOMIC DNA]</scope>
</reference>
<reference key="4">
    <citation type="journal article" date="2004" name="Nucleic Acids Res.">
        <title>Differential evolution of the Saccharomyces cerevisiae DUP240 paralogs and implication of recombination in phylogeny.</title>
        <authorList>
            <person name="Leh-Louis V."/>
            <person name="Wirth B."/>
            <person name="Despons L."/>
            <person name="Wain-Hobson S."/>
            <person name="Potier S."/>
            <person name="Souciet J.-L."/>
        </authorList>
    </citation>
    <scope>NUCLEOTIDE SEQUENCE [GENOMIC DNA]</scope>
    <scope>VARIANTS VAL-48; ARG-172 AND PHE-212</scope>
    <source>
        <strain>ATCC 204508 / S288c</strain>
        <strain>CLIB 219</strain>
        <strain>CLIB 382</strain>
        <strain>CLIB 388</strain>
        <strain>CLIB 410</strain>
        <strain>CLIB 413</strain>
        <strain>CLIB 556</strain>
        <strain>CLIB 630</strain>
        <strain>CLIB 95</strain>
        <strain>K1</strain>
        <strain>R12</strain>
        <strain>R13</strain>
        <strain>Sigma 1278B</strain>
        <strain>YIIc12</strain>
        <strain>YIIc17</strain>
    </source>
</reference>
<reference key="5">
    <citation type="journal article" date="1997" name="Nature">
        <title>The nucleotide sequence of Saccharomyces cerevisiae chromosome IV.</title>
        <authorList>
            <person name="Jacq C."/>
            <person name="Alt-Moerbe J."/>
            <person name="Andre B."/>
            <person name="Arnold W."/>
            <person name="Bahr A."/>
            <person name="Ballesta J.P.G."/>
            <person name="Bargues M."/>
            <person name="Baron L."/>
            <person name="Becker A."/>
            <person name="Biteau N."/>
            <person name="Bloecker H."/>
            <person name="Blugeon C."/>
            <person name="Boskovic J."/>
            <person name="Brandt P."/>
            <person name="Brueckner M."/>
            <person name="Buitrago M.J."/>
            <person name="Coster F."/>
            <person name="Delaveau T."/>
            <person name="del Rey F."/>
            <person name="Dujon B."/>
            <person name="Eide L.G."/>
            <person name="Garcia-Cantalejo J.M."/>
            <person name="Goffeau A."/>
            <person name="Gomez-Peris A."/>
            <person name="Granotier C."/>
            <person name="Hanemann V."/>
            <person name="Hankeln T."/>
            <person name="Hoheisel J.D."/>
            <person name="Jaeger W."/>
            <person name="Jimenez A."/>
            <person name="Jonniaux J.-L."/>
            <person name="Kraemer C."/>
            <person name="Kuester H."/>
            <person name="Laamanen P."/>
            <person name="Legros Y."/>
            <person name="Louis E.J."/>
            <person name="Moeller-Rieker S."/>
            <person name="Monnet A."/>
            <person name="Moro M."/>
            <person name="Mueller-Auer S."/>
            <person name="Nussbaumer B."/>
            <person name="Paricio N."/>
            <person name="Paulin L."/>
            <person name="Perea J."/>
            <person name="Perez-Alonso M."/>
            <person name="Perez-Ortin J.E."/>
            <person name="Pohl T.M."/>
            <person name="Prydz H."/>
            <person name="Purnelle B."/>
            <person name="Rasmussen S.W."/>
            <person name="Remacha M.A."/>
            <person name="Revuelta J.L."/>
            <person name="Rieger M."/>
            <person name="Salom D."/>
            <person name="Saluz H.P."/>
            <person name="Saiz J.E."/>
            <person name="Saren A.-M."/>
            <person name="Schaefer M."/>
            <person name="Scharfe M."/>
            <person name="Schmidt E.R."/>
            <person name="Schneider C."/>
            <person name="Scholler P."/>
            <person name="Schwarz S."/>
            <person name="Soler-Mira A."/>
            <person name="Urrestarazu L.A."/>
            <person name="Verhasselt P."/>
            <person name="Vissers S."/>
            <person name="Voet M."/>
            <person name="Volckaert G."/>
            <person name="Wagner G."/>
            <person name="Wambutt R."/>
            <person name="Wedler E."/>
            <person name="Wedler H."/>
            <person name="Woelfl S."/>
            <person name="Harris D.E."/>
            <person name="Bowman S."/>
            <person name="Brown D."/>
            <person name="Churcher C.M."/>
            <person name="Connor R."/>
            <person name="Dedman K."/>
            <person name="Gentles S."/>
            <person name="Hamlin N."/>
            <person name="Hunt S."/>
            <person name="Jones L."/>
            <person name="McDonald S."/>
            <person name="Murphy L.D."/>
            <person name="Niblett D."/>
            <person name="Odell C."/>
            <person name="Oliver K."/>
            <person name="Rajandream M.A."/>
            <person name="Richards C."/>
            <person name="Shore L."/>
            <person name="Walsh S.V."/>
            <person name="Barrell B.G."/>
            <person name="Dietrich F.S."/>
            <person name="Mulligan J.T."/>
            <person name="Allen E."/>
            <person name="Araujo R."/>
            <person name="Aviles E."/>
            <person name="Berno A."/>
            <person name="Carpenter J."/>
            <person name="Chen E."/>
            <person name="Cherry J.M."/>
            <person name="Chung E."/>
            <person name="Duncan M."/>
            <person name="Hunicke-Smith S."/>
            <person name="Hyman R.W."/>
            <person name="Komp C."/>
            <person name="Lashkari D."/>
            <person name="Lew H."/>
            <person name="Lin D."/>
            <person name="Mosedale D."/>
            <person name="Nakahara K."/>
            <person name="Namath A."/>
            <person name="Oefner P."/>
            <person name="Oh C."/>
            <person name="Petel F.X."/>
            <person name="Roberts D."/>
            <person name="Schramm S."/>
            <person name="Schroeder M."/>
            <person name="Shogren T."/>
            <person name="Shroff N."/>
            <person name="Winant A."/>
            <person name="Yelton M.A."/>
            <person name="Botstein D."/>
            <person name="Davis R.W."/>
            <person name="Johnston M."/>
            <person name="Andrews S."/>
            <person name="Brinkman R."/>
            <person name="Cooper J."/>
            <person name="Ding H."/>
            <person name="Du Z."/>
            <person name="Favello A."/>
            <person name="Fulton L."/>
            <person name="Gattung S."/>
            <person name="Greco T."/>
            <person name="Hallsworth K."/>
            <person name="Hawkins J."/>
            <person name="Hillier L.W."/>
            <person name="Jier M."/>
            <person name="Johnson D."/>
            <person name="Johnston L."/>
            <person name="Kirsten J."/>
            <person name="Kucaba T."/>
            <person name="Langston Y."/>
            <person name="Latreille P."/>
            <person name="Le T."/>
            <person name="Mardis E."/>
            <person name="Menezes S."/>
            <person name="Miller N."/>
            <person name="Nhan M."/>
            <person name="Pauley A."/>
            <person name="Peluso D."/>
            <person name="Rifkin L."/>
            <person name="Riles L."/>
            <person name="Taich A."/>
            <person name="Trevaskis E."/>
            <person name="Vignati D."/>
            <person name="Wilcox L."/>
            <person name="Wohldman P."/>
            <person name="Vaudin M."/>
            <person name="Wilson R."/>
            <person name="Waterston R."/>
            <person name="Albermann K."/>
            <person name="Hani J."/>
            <person name="Heumann K."/>
            <person name="Kleine K."/>
            <person name="Mewes H.-W."/>
            <person name="Zollner A."/>
            <person name="Zaccaria P."/>
        </authorList>
    </citation>
    <scope>NUCLEOTIDE SEQUENCE [LARGE SCALE GENOMIC DNA]</scope>
    <source>
        <strain>ATCC 204508 / S288c</strain>
    </source>
</reference>
<reference key="6">
    <citation type="journal article" date="2014" name="G3 (Bethesda)">
        <title>The reference genome sequence of Saccharomyces cerevisiae: Then and now.</title>
        <authorList>
            <person name="Engel S.R."/>
            <person name="Dietrich F.S."/>
            <person name="Fisk D.G."/>
            <person name="Binkley G."/>
            <person name="Balakrishnan R."/>
            <person name="Costanzo M.C."/>
            <person name="Dwight S.S."/>
            <person name="Hitz B.C."/>
            <person name="Karra K."/>
            <person name="Nash R.S."/>
            <person name="Weng S."/>
            <person name="Wong E.D."/>
            <person name="Lloyd P."/>
            <person name="Skrzypek M.S."/>
            <person name="Miyasato S.R."/>
            <person name="Simison M."/>
            <person name="Cherry J.M."/>
        </authorList>
    </citation>
    <scope>GENOME REANNOTATION</scope>
    <source>
        <strain>ATCC 204508 / S288c</strain>
    </source>
</reference>
<reference key="7">
    <citation type="journal article" date="1986" name="Nature">
        <title>Bent DNA at a yeast autonomously replicating sequence.</title>
        <authorList>
            <person name="Snyder M."/>
            <person name="Buchman A.R."/>
            <person name="Davis R.W."/>
        </authorList>
    </citation>
    <scope>NUCLEOTIDE SEQUENCE [GENOMIC DNA] OF 206-224</scope>
</reference>
<reference key="8">
    <citation type="journal article" date="2003" name="Nature">
        <title>Global analysis of protein expression in yeast.</title>
        <authorList>
            <person name="Ghaemmaghami S."/>
            <person name="Huh W.-K."/>
            <person name="Bower K."/>
            <person name="Howson R.W."/>
            <person name="Belle A."/>
            <person name="Dephoure N."/>
            <person name="O'Shea E.K."/>
            <person name="Weissman J.S."/>
        </authorList>
    </citation>
    <scope>LEVEL OF PROTEIN EXPRESSION [LARGE SCALE ANALYSIS]</scope>
</reference>
<sequence length="224" mass="24144">MSVINFTGSSGPLVKVCGLQSTEAAECALDSDADLLGIICVPNRKRTIDPVIARKISSLVKAYKNSSGTPKYLVGVFRNQPKEDVLALVNDYGIDIVQLHGDESWQEYQEFLGLPVIKRLVFPKDCNILLSAASQKPHSFIPLFDSEAGGTGELLDWNSISDWVGRQESPESLHFMLAGGLTPENVGDALRLNGVIGVDVSGGVETNGVKDSNKIANFVKNAKK</sequence>
<proteinExistence type="evidence at protein level"/>
<dbReference type="EC" id="5.3.1.24"/>
<dbReference type="EMBL" id="V01341">
    <property type="protein sequence ID" value="CAA24634.1"/>
    <property type="molecule type" value="Genomic_DNA"/>
</dbReference>
<dbReference type="EMBL" id="M74015">
    <property type="protein sequence ID" value="AAA72097.1"/>
    <property type="molecule type" value="Genomic_DNA"/>
</dbReference>
<dbReference type="EMBL" id="U37458">
    <property type="protein sequence ID" value="AAA80674.1"/>
    <property type="status" value="ALT_INIT"/>
    <property type="molecule type" value="Genomic_DNA"/>
</dbReference>
<dbReference type="EMBL" id="AJ585667">
    <property type="protein sequence ID" value="CAE52187.1"/>
    <property type="molecule type" value="Genomic_DNA"/>
</dbReference>
<dbReference type="EMBL" id="AJ585668">
    <property type="protein sequence ID" value="CAE52188.1"/>
    <property type="molecule type" value="Genomic_DNA"/>
</dbReference>
<dbReference type="EMBL" id="AJ585669">
    <property type="protein sequence ID" value="CAE52189.1"/>
    <property type="molecule type" value="Genomic_DNA"/>
</dbReference>
<dbReference type="EMBL" id="AJ585670">
    <property type="protein sequence ID" value="CAE52190.1"/>
    <property type="molecule type" value="Genomic_DNA"/>
</dbReference>
<dbReference type="EMBL" id="AJ585671">
    <property type="protein sequence ID" value="CAE52191.1"/>
    <property type="molecule type" value="Genomic_DNA"/>
</dbReference>
<dbReference type="EMBL" id="AJ585672">
    <property type="protein sequence ID" value="CAE52192.1"/>
    <property type="molecule type" value="Genomic_DNA"/>
</dbReference>
<dbReference type="EMBL" id="AJ585673">
    <property type="protein sequence ID" value="CAE52193.1"/>
    <property type="molecule type" value="Genomic_DNA"/>
</dbReference>
<dbReference type="EMBL" id="AJ585674">
    <property type="protein sequence ID" value="CAE52194.1"/>
    <property type="molecule type" value="Genomic_DNA"/>
</dbReference>
<dbReference type="EMBL" id="AJ585675">
    <property type="protein sequence ID" value="CAE52195.1"/>
    <property type="molecule type" value="Genomic_DNA"/>
</dbReference>
<dbReference type="EMBL" id="AJ585676">
    <property type="protein sequence ID" value="CAE52196.1"/>
    <property type="molecule type" value="Genomic_DNA"/>
</dbReference>
<dbReference type="EMBL" id="AJ585677">
    <property type="protein sequence ID" value="CAE52197.1"/>
    <property type="molecule type" value="Genomic_DNA"/>
</dbReference>
<dbReference type="EMBL" id="AJ585678">
    <property type="protein sequence ID" value="CAE52198.1"/>
    <property type="molecule type" value="Genomic_DNA"/>
</dbReference>
<dbReference type="EMBL" id="AJ585679">
    <property type="protein sequence ID" value="CAE52199.1"/>
    <property type="molecule type" value="Genomic_DNA"/>
</dbReference>
<dbReference type="EMBL" id="AJ585680">
    <property type="protein sequence ID" value="CAE52200.1"/>
    <property type="molecule type" value="Genomic_DNA"/>
</dbReference>
<dbReference type="EMBL" id="AJ585681">
    <property type="protein sequence ID" value="CAE52201.1"/>
    <property type="molecule type" value="Genomic_DNA"/>
</dbReference>
<dbReference type="EMBL" id="AJ585682">
    <property type="protein sequence ID" value="CAE52202.1"/>
    <property type="molecule type" value="Genomic_DNA"/>
</dbReference>
<dbReference type="EMBL" id="AJ585683">
    <property type="protein sequence ID" value="CAE52203.1"/>
    <property type="molecule type" value="Genomic_DNA"/>
</dbReference>
<dbReference type="EMBL" id="AJ585684">
    <property type="protein sequence ID" value="CAE52204.1"/>
    <property type="molecule type" value="Genomic_DNA"/>
</dbReference>
<dbReference type="EMBL" id="AJ585685">
    <property type="protein sequence ID" value="CAE52205.1"/>
    <property type="molecule type" value="Genomic_DNA"/>
</dbReference>
<dbReference type="EMBL" id="Z48008">
    <property type="protein sequence ID" value="CAA88067.1"/>
    <property type="status" value="ALT_SEQ"/>
    <property type="molecule type" value="Genomic_DNA"/>
</dbReference>
<dbReference type="EMBL" id="Z48008">
    <property type="protein sequence ID" value="CAA88068.1"/>
    <property type="status" value="ALT_SEQ"/>
    <property type="molecule type" value="Genomic_DNA"/>
</dbReference>
<dbReference type="EMBL" id="M30386">
    <property type="protein sequence ID" value="AAA18406.1"/>
    <property type="molecule type" value="Genomic_DNA"/>
</dbReference>
<dbReference type="EMBL" id="BK006938">
    <property type="protein sequence ID" value="DAA11855.1"/>
    <property type="molecule type" value="Genomic_DNA"/>
</dbReference>
<dbReference type="PIR" id="A01135">
    <property type="entry name" value="ISBYN"/>
</dbReference>
<dbReference type="RefSeq" id="NP_010290.3">
    <property type="nucleotide sequence ID" value="NM_001180315.3"/>
</dbReference>
<dbReference type="SMR" id="P00912"/>
<dbReference type="BioGRID" id="32060">
    <property type="interactions" value="118"/>
</dbReference>
<dbReference type="DIP" id="DIP-2671N"/>
<dbReference type="FunCoup" id="P00912">
    <property type="interactions" value="223"/>
</dbReference>
<dbReference type="IntAct" id="P00912">
    <property type="interactions" value="2"/>
</dbReference>
<dbReference type="MINT" id="P00912"/>
<dbReference type="STRING" id="4932.YDR007W"/>
<dbReference type="iPTMnet" id="P00912"/>
<dbReference type="PaxDb" id="4932-YDR007W"/>
<dbReference type="PeptideAtlas" id="P00912"/>
<dbReference type="EnsemblFungi" id="YDR007W_mRNA">
    <property type="protein sequence ID" value="YDR007W"/>
    <property type="gene ID" value="YDR007W"/>
</dbReference>
<dbReference type="GeneID" id="851570"/>
<dbReference type="KEGG" id="sce:YDR007W"/>
<dbReference type="AGR" id="SGD:S000002414"/>
<dbReference type="SGD" id="S000002414">
    <property type="gene designation" value="TRP1"/>
</dbReference>
<dbReference type="VEuPathDB" id="FungiDB:YDR007W"/>
<dbReference type="eggNOG" id="KOG4202">
    <property type="taxonomic scope" value="Eukaryota"/>
</dbReference>
<dbReference type="HOGENOM" id="CLU_076364_1_0_1"/>
<dbReference type="InParanoid" id="P00912"/>
<dbReference type="OMA" id="FHGDESP"/>
<dbReference type="OrthoDB" id="524799at2759"/>
<dbReference type="BioCyc" id="YEAST:YDR007W-MONOMER"/>
<dbReference type="UniPathway" id="UPA00035">
    <property type="reaction ID" value="UER00042"/>
</dbReference>
<dbReference type="BioGRID-ORCS" id="851570">
    <property type="hits" value="1 hit in 10 CRISPR screens"/>
</dbReference>
<dbReference type="PRO" id="PR:P00912"/>
<dbReference type="Proteomes" id="UP000002311">
    <property type="component" value="Chromosome IV"/>
</dbReference>
<dbReference type="RNAct" id="P00912">
    <property type="molecule type" value="protein"/>
</dbReference>
<dbReference type="GO" id="GO:0005737">
    <property type="term" value="C:cytoplasm"/>
    <property type="evidence" value="ECO:0007005"/>
    <property type="project" value="SGD"/>
</dbReference>
<dbReference type="GO" id="GO:0004640">
    <property type="term" value="F:phosphoribosylanthranilate isomerase activity"/>
    <property type="evidence" value="ECO:0000314"/>
    <property type="project" value="SGD"/>
</dbReference>
<dbReference type="GO" id="GO:0000162">
    <property type="term" value="P:L-tryptophan biosynthetic process"/>
    <property type="evidence" value="ECO:0000314"/>
    <property type="project" value="SGD"/>
</dbReference>
<dbReference type="CDD" id="cd00405">
    <property type="entry name" value="PRAI"/>
    <property type="match status" value="1"/>
</dbReference>
<dbReference type="FunFam" id="3.20.20.70:FF:000199">
    <property type="entry name" value="Phosphoribosylanthranilate isomerase"/>
    <property type="match status" value="1"/>
</dbReference>
<dbReference type="Gene3D" id="3.20.20.70">
    <property type="entry name" value="Aldolase class I"/>
    <property type="match status" value="1"/>
</dbReference>
<dbReference type="HAMAP" id="MF_00135">
    <property type="entry name" value="PRAI"/>
    <property type="match status" value="1"/>
</dbReference>
<dbReference type="InterPro" id="IPR013785">
    <property type="entry name" value="Aldolase_TIM"/>
</dbReference>
<dbReference type="InterPro" id="IPR001240">
    <property type="entry name" value="PRAI_dom"/>
</dbReference>
<dbReference type="InterPro" id="IPR011060">
    <property type="entry name" value="RibuloseP-bd_barrel"/>
</dbReference>
<dbReference type="InterPro" id="IPR044643">
    <property type="entry name" value="TrpF_fam"/>
</dbReference>
<dbReference type="PANTHER" id="PTHR42894">
    <property type="entry name" value="N-(5'-PHOSPHORIBOSYL)ANTHRANILATE ISOMERASE"/>
    <property type="match status" value="1"/>
</dbReference>
<dbReference type="PANTHER" id="PTHR42894:SF1">
    <property type="entry name" value="N-(5'-PHOSPHORIBOSYL)ANTHRANILATE ISOMERASE"/>
    <property type="match status" value="1"/>
</dbReference>
<dbReference type="Pfam" id="PF00697">
    <property type="entry name" value="PRAI"/>
    <property type="match status" value="1"/>
</dbReference>
<dbReference type="SUPFAM" id="SSF51366">
    <property type="entry name" value="Ribulose-phoshate binding barrel"/>
    <property type="match status" value="1"/>
</dbReference>
<protein>
    <recommendedName>
        <fullName>N-(5'-phosphoribosyl)anthranilate isomerase</fullName>
        <shortName>PRAI</shortName>
        <ecNumber>5.3.1.24</ecNumber>
    </recommendedName>
</protein>
<keyword id="KW-0028">Amino-acid biosynthesis</keyword>
<keyword id="KW-0057">Aromatic amino acid biosynthesis</keyword>
<keyword id="KW-0413">Isomerase</keyword>
<keyword id="KW-1185">Reference proteome</keyword>
<keyword id="KW-0822">Tryptophan biosynthesis</keyword>
<gene>
    <name type="primary">TRP1</name>
    <name type="ordered locus">YDR007W</name>
</gene>
<name>TRPF_YEAST</name>
<evidence type="ECO:0000269" key="1">
    <source>
    </source>
</evidence>
<evidence type="ECO:0000269" key="2">
    <source>
    </source>
</evidence>
<evidence type="ECO:0000305" key="3"/>
<organism>
    <name type="scientific">Saccharomyces cerevisiae (strain ATCC 204508 / S288c)</name>
    <name type="common">Baker's yeast</name>
    <dbReference type="NCBI Taxonomy" id="559292"/>
    <lineage>
        <taxon>Eukaryota</taxon>
        <taxon>Fungi</taxon>
        <taxon>Dikarya</taxon>
        <taxon>Ascomycota</taxon>
        <taxon>Saccharomycotina</taxon>
        <taxon>Saccharomycetes</taxon>
        <taxon>Saccharomycetales</taxon>
        <taxon>Saccharomycetaceae</taxon>
        <taxon>Saccharomyces</taxon>
    </lineage>
</organism>
<accession>P00912</accession>
<accession>D6VRZ5</accession>
<accession>Q03448</accession>
<accession>Q12131</accession>
<accession>Q70DA4</accession>
<accession>Q70DA7</accession>
<accession>Q70DB2</accession>
<accession>Q7LHE0</accession>
<feature type="chain" id="PRO_0000154337" description="N-(5'-phosphoribosyl)anthranilate isomerase">
    <location>
        <begin position="1"/>
        <end position="224"/>
    </location>
</feature>
<feature type="sequence variant" description="In strain: CLIB 556 haplotype Ha2 and CLIB 630 haplotype Ha2." evidence="2">
    <original>I</original>
    <variation>V</variation>
    <location>
        <position position="48"/>
    </location>
</feature>
<feature type="sequence variant" description="In strain: CLIB 556 haplotype Ha1." evidence="2">
    <original>S</original>
    <variation>R</variation>
    <location>
        <position position="172"/>
    </location>
</feature>
<feature type="sequence variant" description="In strain: CLIB 95, CLIB 382, CLIB 388, CLIB 556 haplotype Ha2, CLIB 630, K1, R12, R13, YIIc12 haplotype Ha2 and YIIc17 haplotype Ha1." evidence="2">
    <original>S</original>
    <variation>F</variation>
    <location>
        <position position="212"/>
    </location>
</feature>
<comment type="catalytic activity">
    <reaction>
        <text>N-(5-phospho-beta-D-ribosyl)anthranilate = 1-(2-carboxyphenylamino)-1-deoxy-D-ribulose 5-phosphate</text>
        <dbReference type="Rhea" id="RHEA:21540"/>
        <dbReference type="ChEBI" id="CHEBI:18277"/>
        <dbReference type="ChEBI" id="CHEBI:58613"/>
        <dbReference type="EC" id="5.3.1.24"/>
    </reaction>
</comment>
<comment type="pathway">
    <text>Amino-acid biosynthesis; L-tryptophan biosynthesis; L-tryptophan from chorismate: step 3/5.</text>
</comment>
<comment type="miscellaneous">
    <text evidence="1">Present with 1850 molecules/cell in log phase SD medium.</text>
</comment>
<comment type="similarity">
    <text evidence="3">Belongs to the TrpF family.</text>
</comment>
<comment type="sequence caution" evidence="3">
    <conflict type="erroneous initiation">
        <sequence resource="EMBL-CDS" id="AAA80674"/>
    </conflict>
</comment>
<comment type="sequence caution" evidence="3">
    <conflict type="erroneous termination">
        <sequence resource="EMBL-CDS" id="CAA88067"/>
    </conflict>
    <text>Truncated C-terminus. This mutation is only found in the substrain S288c / AB972. The S288c reference strain does not contain this mutation.</text>
</comment>
<comment type="sequence caution" evidence="3">
    <conflict type="erroneous termination">
        <sequence resource="EMBL-CDS" id="CAA88068"/>
    </conflict>
    <text>Truncated C-terminus. This mutation is only found in the substrain S288c / AB972. The S288c reference strain does not contain this mutation.</text>
</comment>